<name>RL32_GLOC7</name>
<protein>
    <recommendedName>
        <fullName evidence="1">Large ribosomal subunit protein bL32</fullName>
    </recommendedName>
    <alternativeName>
        <fullName evidence="3">50S ribosomal protein L32</fullName>
    </alternativeName>
</protein>
<organism>
    <name type="scientific">Gloeothece citriformis (strain PCC 7424)</name>
    <name type="common">Cyanothece sp. (strain PCC 7424)</name>
    <dbReference type="NCBI Taxonomy" id="65393"/>
    <lineage>
        <taxon>Bacteria</taxon>
        <taxon>Bacillati</taxon>
        <taxon>Cyanobacteriota</taxon>
        <taxon>Cyanophyceae</taxon>
        <taxon>Oscillatoriophycideae</taxon>
        <taxon>Chroococcales</taxon>
        <taxon>Aphanothecaceae</taxon>
        <taxon>Gloeothece</taxon>
        <taxon>Gloeothece citriformis</taxon>
    </lineage>
</organism>
<dbReference type="EMBL" id="CP001291">
    <property type="protein sequence ID" value="ACK73645.1"/>
    <property type="molecule type" value="Genomic_DNA"/>
</dbReference>
<dbReference type="RefSeq" id="WP_015957221.1">
    <property type="nucleotide sequence ID" value="NC_011729.1"/>
</dbReference>
<dbReference type="SMR" id="B7KJG8"/>
<dbReference type="STRING" id="65393.PCC7424_5297"/>
<dbReference type="KEGG" id="cyc:PCC7424_5297"/>
<dbReference type="eggNOG" id="COG0333">
    <property type="taxonomic scope" value="Bacteria"/>
</dbReference>
<dbReference type="HOGENOM" id="CLU_199882_0_0_3"/>
<dbReference type="Proteomes" id="UP000002384">
    <property type="component" value="Chromosome"/>
</dbReference>
<dbReference type="GO" id="GO:0015934">
    <property type="term" value="C:large ribosomal subunit"/>
    <property type="evidence" value="ECO:0007669"/>
    <property type="project" value="InterPro"/>
</dbReference>
<dbReference type="GO" id="GO:0003735">
    <property type="term" value="F:structural constituent of ribosome"/>
    <property type="evidence" value="ECO:0007669"/>
    <property type="project" value="InterPro"/>
</dbReference>
<dbReference type="GO" id="GO:0006412">
    <property type="term" value="P:translation"/>
    <property type="evidence" value="ECO:0007669"/>
    <property type="project" value="UniProtKB-UniRule"/>
</dbReference>
<dbReference type="Gene3D" id="1.20.5.640">
    <property type="entry name" value="Single helix bin"/>
    <property type="match status" value="1"/>
</dbReference>
<dbReference type="HAMAP" id="MF_00340">
    <property type="entry name" value="Ribosomal_bL32"/>
    <property type="match status" value="1"/>
</dbReference>
<dbReference type="InterPro" id="IPR002677">
    <property type="entry name" value="Ribosomal_bL32"/>
</dbReference>
<dbReference type="InterPro" id="IPR044958">
    <property type="entry name" value="Ribosomal_bL32_plant/cyanobact"/>
</dbReference>
<dbReference type="InterPro" id="IPR011332">
    <property type="entry name" value="Ribosomal_zn-bd"/>
</dbReference>
<dbReference type="NCBIfam" id="TIGR01031">
    <property type="entry name" value="rpmF_bact"/>
    <property type="match status" value="1"/>
</dbReference>
<dbReference type="PANTHER" id="PTHR36083">
    <property type="entry name" value="50S RIBOSOMAL PROTEIN L32, CHLOROPLASTIC"/>
    <property type="match status" value="1"/>
</dbReference>
<dbReference type="PANTHER" id="PTHR36083:SF1">
    <property type="entry name" value="LARGE RIBOSOMAL SUBUNIT PROTEIN BL32C"/>
    <property type="match status" value="1"/>
</dbReference>
<dbReference type="Pfam" id="PF01783">
    <property type="entry name" value="Ribosomal_L32p"/>
    <property type="match status" value="1"/>
</dbReference>
<dbReference type="SUPFAM" id="SSF57829">
    <property type="entry name" value="Zn-binding ribosomal proteins"/>
    <property type="match status" value="1"/>
</dbReference>
<reference key="1">
    <citation type="journal article" date="2011" name="MBio">
        <title>Novel metabolic attributes of the genus Cyanothece, comprising a group of unicellular nitrogen-fixing Cyanobacteria.</title>
        <authorList>
            <person name="Bandyopadhyay A."/>
            <person name="Elvitigala T."/>
            <person name="Welsh E."/>
            <person name="Stockel J."/>
            <person name="Liberton M."/>
            <person name="Min H."/>
            <person name="Sherman L.A."/>
            <person name="Pakrasi H.B."/>
        </authorList>
    </citation>
    <scope>NUCLEOTIDE SEQUENCE [LARGE SCALE GENOMIC DNA]</scope>
    <source>
        <strain>PCC 7424</strain>
    </source>
</reference>
<evidence type="ECO:0000255" key="1">
    <source>
        <dbReference type="HAMAP-Rule" id="MF_00340"/>
    </source>
</evidence>
<evidence type="ECO:0000256" key="2">
    <source>
        <dbReference type="SAM" id="MobiDB-lite"/>
    </source>
</evidence>
<evidence type="ECO:0000305" key="3"/>
<accession>B7KJG8</accession>
<sequence>MAVPKKKTSKAKRDQRRATWRRQAALQAQRALSLGKSVLTGRSNSFVYPEDEDEDED</sequence>
<comment type="similarity">
    <text evidence="1">Belongs to the bacterial ribosomal protein bL32 family.</text>
</comment>
<feature type="chain" id="PRO_1000120111" description="Large ribosomal subunit protein bL32">
    <location>
        <begin position="1"/>
        <end position="57"/>
    </location>
</feature>
<feature type="region of interest" description="Disordered" evidence="2">
    <location>
        <begin position="1"/>
        <end position="24"/>
    </location>
</feature>
<feature type="compositionally biased region" description="Basic residues" evidence="2">
    <location>
        <begin position="1"/>
        <end position="20"/>
    </location>
</feature>
<gene>
    <name evidence="1" type="primary">rpmF</name>
    <name evidence="1" type="synonym">rpl32</name>
    <name type="ordered locus">PCC7424_5297</name>
</gene>
<proteinExistence type="inferred from homology"/>
<keyword id="KW-1185">Reference proteome</keyword>
<keyword id="KW-0687">Ribonucleoprotein</keyword>
<keyword id="KW-0689">Ribosomal protein</keyword>